<accession>Q865K8</accession>
<proteinExistence type="evidence at transcript level"/>
<gene>
    <name type="primary">PAQR7</name>
    <name type="synonym">MRPA</name>
</gene>
<sequence length="350" mass="39995">MATMVAQKLSHLLPSLRQVHPEPQPSVHPEPVFTVDRAEVPPLFWKPYIYVGYRPLHQTWRFYFRTLFQQHNEAVNVWTHLLAALVLLLRLAIFVGTVDFWGDPHALPLFIIVLASFTYLSLSALAHLLQAKSEFWHYSFFFLDYVGVAVYQFGSALAHFYYAIEPAWHAQVQTIFLPMAAFLAWLSCTGSCYNKYIQKPGLLGRTCQEVPSALAYALDISPVAHRILASPEPATDDPALLYHKCQVVFFLLAAAFFSAFMPERWFPGSCHIFGQGHQLFHVFLVLCTLAQLEAVALDYEARRPIYEPLHTRWPHNFSGLFLLTVGSSILTAFLLSQLVRRKLDLDRKTQ</sequence>
<protein>
    <recommendedName>
        <fullName evidence="1">Membrane progestin receptor alpha</fullName>
        <shortName evidence="1">mPR alpha</shortName>
    </recommendedName>
    <alternativeName>
        <fullName evidence="1">Membrane progesterone P4 receptor alpha</fullName>
    </alternativeName>
    <alternativeName>
        <fullName evidence="1">Membrane progesterone receptor alpha</fullName>
    </alternativeName>
    <alternativeName>
        <fullName>Progesterone and adipoQ receptor family member 7</fullName>
    </alternativeName>
    <alternativeName>
        <fullName evidence="1">Progestin and adipoQ receptor family member 7</fullName>
    </alternativeName>
    <alternativeName>
        <fullName>Progestin and adipoQ receptor family member VII</fullName>
    </alternativeName>
</protein>
<keyword id="KW-1003">Cell membrane</keyword>
<keyword id="KW-0217">Developmental protein</keyword>
<keyword id="KW-0221">Differentiation</keyword>
<keyword id="KW-0446">Lipid-binding</keyword>
<keyword id="KW-0472">Membrane</keyword>
<keyword id="KW-0896">Oogenesis</keyword>
<keyword id="KW-0675">Receptor</keyword>
<keyword id="KW-1185">Reference proteome</keyword>
<keyword id="KW-0754">Steroid-binding</keyword>
<keyword id="KW-0812">Transmembrane</keyword>
<keyword id="KW-1133">Transmembrane helix</keyword>
<dbReference type="EMBL" id="AF313616">
    <property type="protein sequence ID" value="AAO47229.1"/>
    <property type="molecule type" value="mRNA"/>
</dbReference>
<dbReference type="RefSeq" id="NP_998904.1">
    <property type="nucleotide sequence ID" value="NM_213739.1"/>
</dbReference>
<dbReference type="RefSeq" id="XP_003482048.1">
    <property type="nucleotide sequence ID" value="XM_003482000.3"/>
</dbReference>
<dbReference type="RefSeq" id="XP_013854519.1">
    <property type="nucleotide sequence ID" value="XM_013999065.1"/>
</dbReference>
<dbReference type="RefSeq" id="XP_020949108.1">
    <property type="nucleotide sequence ID" value="XM_021093449.1"/>
</dbReference>
<dbReference type="RefSeq" id="XP_020949109.1">
    <property type="nucleotide sequence ID" value="XM_021093450.1"/>
</dbReference>
<dbReference type="RefSeq" id="XP_020949110.1">
    <property type="nucleotide sequence ID" value="XM_021093451.1"/>
</dbReference>
<dbReference type="SMR" id="Q865K8"/>
<dbReference type="FunCoup" id="Q865K8">
    <property type="interactions" value="185"/>
</dbReference>
<dbReference type="STRING" id="9823.ENSSSCP00000066848"/>
<dbReference type="PaxDb" id="9823-ENSSSCP00000003854"/>
<dbReference type="Ensembl" id="ENSSSCT00000003945.5">
    <property type="protein sequence ID" value="ENSSSCP00000003854.2"/>
    <property type="gene ID" value="ENSSSCG00000003551.5"/>
</dbReference>
<dbReference type="Ensembl" id="ENSSSCT00000028664.3">
    <property type="protein sequence ID" value="ENSSSCP00000027353.1"/>
    <property type="gene ID" value="ENSSSCG00000003551.5"/>
</dbReference>
<dbReference type="Ensembl" id="ENSSSCT00000076266.2">
    <property type="protein sequence ID" value="ENSSSCP00000062909.1"/>
    <property type="gene ID" value="ENSSSCG00000003551.5"/>
</dbReference>
<dbReference type="Ensembl" id="ENSSSCT00000080288.2">
    <property type="protein sequence ID" value="ENSSSCP00000066848.1"/>
    <property type="gene ID" value="ENSSSCG00000003551.5"/>
</dbReference>
<dbReference type="Ensembl" id="ENSSSCT00015080291.1">
    <property type="protein sequence ID" value="ENSSSCP00015032458.1"/>
    <property type="gene ID" value="ENSSSCG00015060094.1"/>
</dbReference>
<dbReference type="Ensembl" id="ENSSSCT00015080438.1">
    <property type="protein sequence ID" value="ENSSSCP00015032509.1"/>
    <property type="gene ID" value="ENSSSCG00015060094.1"/>
</dbReference>
<dbReference type="Ensembl" id="ENSSSCT00015080496.1">
    <property type="protein sequence ID" value="ENSSSCP00015032532.1"/>
    <property type="gene ID" value="ENSSSCG00015060094.1"/>
</dbReference>
<dbReference type="Ensembl" id="ENSSSCT00015080585.1">
    <property type="protein sequence ID" value="ENSSSCP00015032574.1"/>
    <property type="gene ID" value="ENSSSCG00015060094.1"/>
</dbReference>
<dbReference type="Ensembl" id="ENSSSCT00025023775.1">
    <property type="protein sequence ID" value="ENSSSCP00025009988.1"/>
    <property type="gene ID" value="ENSSSCG00025017582.1"/>
</dbReference>
<dbReference type="Ensembl" id="ENSSSCT00025023786.1">
    <property type="protein sequence ID" value="ENSSSCP00025009997.1"/>
    <property type="gene ID" value="ENSSSCG00025017582.1"/>
</dbReference>
<dbReference type="Ensembl" id="ENSSSCT00025023797.1">
    <property type="protein sequence ID" value="ENSSSCP00025010004.1"/>
    <property type="gene ID" value="ENSSSCG00025017582.1"/>
</dbReference>
<dbReference type="Ensembl" id="ENSSSCT00025023808.1">
    <property type="protein sequence ID" value="ENSSSCP00025010013.1"/>
    <property type="gene ID" value="ENSSSCG00025017582.1"/>
</dbReference>
<dbReference type="Ensembl" id="ENSSSCT00030067457.1">
    <property type="protein sequence ID" value="ENSSSCP00030030887.1"/>
    <property type="gene ID" value="ENSSSCG00030048324.1"/>
</dbReference>
<dbReference type="Ensembl" id="ENSSSCT00030067462.1">
    <property type="protein sequence ID" value="ENSSSCP00030030889.1"/>
    <property type="gene ID" value="ENSSSCG00030048324.1"/>
</dbReference>
<dbReference type="Ensembl" id="ENSSSCT00030067479.1">
    <property type="protein sequence ID" value="ENSSSCP00030030892.1"/>
    <property type="gene ID" value="ENSSSCG00030048324.1"/>
</dbReference>
<dbReference type="Ensembl" id="ENSSSCT00030067489.1">
    <property type="protein sequence ID" value="ENSSSCP00030030895.1"/>
    <property type="gene ID" value="ENSSSCG00030048324.1"/>
</dbReference>
<dbReference type="Ensembl" id="ENSSSCT00035105177.1">
    <property type="protein sequence ID" value="ENSSSCP00035045126.1"/>
    <property type="gene ID" value="ENSSSCG00035077253.1"/>
</dbReference>
<dbReference type="Ensembl" id="ENSSSCT00035105252.1">
    <property type="protein sequence ID" value="ENSSSCP00035045165.1"/>
    <property type="gene ID" value="ENSSSCG00035077253.1"/>
</dbReference>
<dbReference type="Ensembl" id="ENSSSCT00035105255.1">
    <property type="protein sequence ID" value="ENSSSCP00035045167.1"/>
    <property type="gene ID" value="ENSSSCG00035077253.1"/>
</dbReference>
<dbReference type="Ensembl" id="ENSSSCT00035105270.1">
    <property type="protein sequence ID" value="ENSSSCP00035045177.1"/>
    <property type="gene ID" value="ENSSSCG00035077253.1"/>
</dbReference>
<dbReference type="Ensembl" id="ENSSSCT00040103945.1">
    <property type="protein sequence ID" value="ENSSSCP00040047243.1"/>
    <property type="gene ID" value="ENSSSCG00040075056.1"/>
</dbReference>
<dbReference type="Ensembl" id="ENSSSCT00040103955.1">
    <property type="protein sequence ID" value="ENSSSCP00040047249.1"/>
    <property type="gene ID" value="ENSSSCG00040075056.1"/>
</dbReference>
<dbReference type="Ensembl" id="ENSSSCT00040103965.1">
    <property type="protein sequence ID" value="ENSSSCP00040047255.1"/>
    <property type="gene ID" value="ENSSSCG00040075056.1"/>
</dbReference>
<dbReference type="Ensembl" id="ENSSSCT00040103974.1">
    <property type="protein sequence ID" value="ENSSSCP00040047261.1"/>
    <property type="gene ID" value="ENSSSCG00040075056.1"/>
</dbReference>
<dbReference type="Ensembl" id="ENSSSCT00045066547.1">
    <property type="protein sequence ID" value="ENSSSCP00045047219.1"/>
    <property type="gene ID" value="ENSSSCG00045038375.1"/>
</dbReference>
<dbReference type="Ensembl" id="ENSSSCT00045066560.1">
    <property type="protein sequence ID" value="ENSSSCP00045047230.1"/>
    <property type="gene ID" value="ENSSSCG00045038375.1"/>
</dbReference>
<dbReference type="Ensembl" id="ENSSSCT00045066564.1">
    <property type="protein sequence ID" value="ENSSSCP00045047233.1"/>
    <property type="gene ID" value="ENSSSCG00045038375.1"/>
</dbReference>
<dbReference type="Ensembl" id="ENSSSCT00045066574.1">
    <property type="protein sequence ID" value="ENSSSCP00045047239.1"/>
    <property type="gene ID" value="ENSSSCG00045038375.1"/>
</dbReference>
<dbReference type="Ensembl" id="ENSSSCT00050069379.1">
    <property type="protein sequence ID" value="ENSSSCP00050029808.1"/>
    <property type="gene ID" value="ENSSSCG00050050967.1"/>
</dbReference>
<dbReference type="Ensembl" id="ENSSSCT00050069380.1">
    <property type="protein sequence ID" value="ENSSSCP00050029809.1"/>
    <property type="gene ID" value="ENSSSCG00050050967.1"/>
</dbReference>
<dbReference type="Ensembl" id="ENSSSCT00050069381.1">
    <property type="protein sequence ID" value="ENSSSCP00050029810.1"/>
    <property type="gene ID" value="ENSSSCG00050050967.1"/>
</dbReference>
<dbReference type="Ensembl" id="ENSSSCT00050069385.1">
    <property type="protein sequence ID" value="ENSSSCP00050029812.1"/>
    <property type="gene ID" value="ENSSSCG00050050967.1"/>
</dbReference>
<dbReference type="Ensembl" id="ENSSSCT00055036812.1">
    <property type="protein sequence ID" value="ENSSSCP00055029262.1"/>
    <property type="gene ID" value="ENSSSCG00055018816.1"/>
</dbReference>
<dbReference type="Ensembl" id="ENSSSCT00055036882.1">
    <property type="protein sequence ID" value="ENSSSCP00055029318.1"/>
    <property type="gene ID" value="ENSSSCG00055018816.1"/>
</dbReference>
<dbReference type="Ensembl" id="ENSSSCT00055036924.1">
    <property type="protein sequence ID" value="ENSSSCP00055029359.1"/>
    <property type="gene ID" value="ENSSSCG00055018816.1"/>
</dbReference>
<dbReference type="Ensembl" id="ENSSSCT00055036968.1">
    <property type="protein sequence ID" value="ENSSSCP00055029391.1"/>
    <property type="gene ID" value="ENSSSCG00055018816.1"/>
</dbReference>
<dbReference type="Ensembl" id="ENSSSCT00060100372.1">
    <property type="protein sequence ID" value="ENSSSCP00060043585.1"/>
    <property type="gene ID" value="ENSSSCG00060073422.1"/>
</dbReference>
<dbReference type="Ensembl" id="ENSSSCT00060100411.1">
    <property type="protein sequence ID" value="ENSSSCP00060043602.1"/>
    <property type="gene ID" value="ENSSSCG00060073422.1"/>
</dbReference>
<dbReference type="Ensembl" id="ENSSSCT00060100415.1">
    <property type="protein sequence ID" value="ENSSSCP00060043605.1"/>
    <property type="gene ID" value="ENSSSCG00060073422.1"/>
</dbReference>
<dbReference type="Ensembl" id="ENSSSCT00060100419.1">
    <property type="protein sequence ID" value="ENSSSCP00060043609.1"/>
    <property type="gene ID" value="ENSSSCG00060073422.1"/>
</dbReference>
<dbReference type="Ensembl" id="ENSSSCT00065005151.1">
    <property type="protein sequence ID" value="ENSSSCP00065002235.1"/>
    <property type="gene ID" value="ENSSSCG00065003782.1"/>
</dbReference>
<dbReference type="Ensembl" id="ENSSSCT00065005153.1">
    <property type="protein sequence ID" value="ENSSSCP00065002237.1"/>
    <property type="gene ID" value="ENSSSCG00065003782.1"/>
</dbReference>
<dbReference type="Ensembl" id="ENSSSCT00065005155.1">
    <property type="protein sequence ID" value="ENSSSCP00065002238.1"/>
    <property type="gene ID" value="ENSSSCG00065003782.1"/>
</dbReference>
<dbReference type="Ensembl" id="ENSSSCT00065005158.1">
    <property type="protein sequence ID" value="ENSSSCP00065002240.1"/>
    <property type="gene ID" value="ENSSSCG00065003782.1"/>
</dbReference>
<dbReference type="Ensembl" id="ENSSSCT00070052673.1">
    <property type="protein sequence ID" value="ENSSSCP00070044598.1"/>
    <property type="gene ID" value="ENSSSCG00070026285.1"/>
</dbReference>
<dbReference type="Ensembl" id="ENSSSCT00070052676.1">
    <property type="protein sequence ID" value="ENSSSCP00070044601.1"/>
    <property type="gene ID" value="ENSSSCG00070026285.1"/>
</dbReference>
<dbReference type="Ensembl" id="ENSSSCT00105054461">
    <property type="protein sequence ID" value="ENSSSCP00105038293"/>
    <property type="gene ID" value="ENSSSCG00105028654"/>
</dbReference>
<dbReference type="Ensembl" id="ENSSSCT00105054471">
    <property type="protein sequence ID" value="ENSSSCP00105038298"/>
    <property type="gene ID" value="ENSSSCG00105028654"/>
</dbReference>
<dbReference type="Ensembl" id="ENSSSCT00105054483">
    <property type="protein sequence ID" value="ENSSSCP00105038305"/>
    <property type="gene ID" value="ENSSSCG00105028654"/>
</dbReference>
<dbReference type="Ensembl" id="ENSSSCT00110015797">
    <property type="protein sequence ID" value="ENSSSCP00110010991"/>
    <property type="gene ID" value="ENSSSCG00110008148"/>
</dbReference>
<dbReference type="Ensembl" id="ENSSSCT00110015805">
    <property type="protein sequence ID" value="ENSSSCP00110010995"/>
    <property type="gene ID" value="ENSSSCG00110008148"/>
</dbReference>
<dbReference type="Ensembl" id="ENSSSCT00110015808">
    <property type="protein sequence ID" value="ENSSSCP00110010998"/>
    <property type="gene ID" value="ENSSSCG00110008148"/>
</dbReference>
<dbReference type="Ensembl" id="ENSSSCT00110015810">
    <property type="protein sequence ID" value="ENSSSCP00110011000"/>
    <property type="gene ID" value="ENSSSCG00110008148"/>
</dbReference>
<dbReference type="Ensembl" id="ENSSSCT00115033022">
    <property type="protein sequence ID" value="ENSSSCP00115031355"/>
    <property type="gene ID" value="ENSSSCG00115018666"/>
</dbReference>
<dbReference type="Ensembl" id="ENSSSCT00130068180">
    <property type="protein sequence ID" value="ENSSSCP00130048931"/>
    <property type="gene ID" value="ENSSSCG00130034921"/>
</dbReference>
<dbReference type="Ensembl" id="ENSSSCT00130068189">
    <property type="protein sequence ID" value="ENSSSCP00130048940"/>
    <property type="gene ID" value="ENSSSCG00130034921"/>
</dbReference>
<dbReference type="Ensembl" id="ENSSSCT00130068193">
    <property type="protein sequence ID" value="ENSSSCP00130048944"/>
    <property type="gene ID" value="ENSSSCG00130034921"/>
</dbReference>
<dbReference type="GeneID" id="396558"/>
<dbReference type="KEGG" id="ssc:396558"/>
<dbReference type="CTD" id="164091"/>
<dbReference type="VGNC" id="VGNC:91177">
    <property type="gene designation" value="PAQR7"/>
</dbReference>
<dbReference type="eggNOG" id="KOG0748">
    <property type="taxonomic scope" value="Eukaryota"/>
</dbReference>
<dbReference type="GeneTree" id="ENSGT00940000161438"/>
<dbReference type="HOGENOM" id="CLU_052356_0_0_1"/>
<dbReference type="InParanoid" id="Q865K8"/>
<dbReference type="OMA" id="FIFTTCC"/>
<dbReference type="OrthoDB" id="535992at2759"/>
<dbReference type="TreeFam" id="TF319738"/>
<dbReference type="Proteomes" id="UP000008227">
    <property type="component" value="Chromosome 6"/>
</dbReference>
<dbReference type="Proteomes" id="UP000314985">
    <property type="component" value="Chromosome 6"/>
</dbReference>
<dbReference type="Proteomes" id="UP000694570">
    <property type="component" value="Unplaced"/>
</dbReference>
<dbReference type="Proteomes" id="UP000694571">
    <property type="component" value="Unplaced"/>
</dbReference>
<dbReference type="Proteomes" id="UP000694720">
    <property type="component" value="Unplaced"/>
</dbReference>
<dbReference type="Proteomes" id="UP000694722">
    <property type="component" value="Unplaced"/>
</dbReference>
<dbReference type="Proteomes" id="UP000694723">
    <property type="component" value="Unplaced"/>
</dbReference>
<dbReference type="Proteomes" id="UP000694724">
    <property type="component" value="Unplaced"/>
</dbReference>
<dbReference type="Proteomes" id="UP000694725">
    <property type="component" value="Unplaced"/>
</dbReference>
<dbReference type="Proteomes" id="UP000694726">
    <property type="component" value="Unplaced"/>
</dbReference>
<dbReference type="Proteomes" id="UP000694727">
    <property type="component" value="Unplaced"/>
</dbReference>
<dbReference type="Proteomes" id="UP000694728">
    <property type="component" value="Unplaced"/>
</dbReference>
<dbReference type="Bgee" id="ENSSSCG00000003551">
    <property type="expression patterns" value="Expressed in oocyte and 39 other cell types or tissues"/>
</dbReference>
<dbReference type="GO" id="GO:0005886">
    <property type="term" value="C:plasma membrane"/>
    <property type="evidence" value="ECO:0000318"/>
    <property type="project" value="GO_Central"/>
</dbReference>
<dbReference type="GO" id="GO:0003707">
    <property type="term" value="F:nuclear steroid receptor activity"/>
    <property type="evidence" value="ECO:0000318"/>
    <property type="project" value="GO_Central"/>
</dbReference>
<dbReference type="GO" id="GO:0005496">
    <property type="term" value="F:steroid binding"/>
    <property type="evidence" value="ECO:0000318"/>
    <property type="project" value="GO_Central"/>
</dbReference>
<dbReference type="GO" id="GO:0048477">
    <property type="term" value="P:oogenesis"/>
    <property type="evidence" value="ECO:0007669"/>
    <property type="project" value="UniProtKB-KW"/>
</dbReference>
<dbReference type="GO" id="GO:0048545">
    <property type="term" value="P:response to steroid hormone"/>
    <property type="evidence" value="ECO:0000318"/>
    <property type="project" value="GO_Central"/>
</dbReference>
<dbReference type="InterPro" id="IPR004254">
    <property type="entry name" value="AdipoR/HlyIII-related"/>
</dbReference>
<dbReference type="PANTHER" id="PTHR20855">
    <property type="entry name" value="ADIPOR/PROGESTIN RECEPTOR-RELATED"/>
    <property type="match status" value="1"/>
</dbReference>
<dbReference type="PANTHER" id="PTHR20855:SF41">
    <property type="entry name" value="MEMBRANE PROGESTIN RECEPTOR ALPHA"/>
    <property type="match status" value="1"/>
</dbReference>
<dbReference type="Pfam" id="PF03006">
    <property type="entry name" value="HlyIII"/>
    <property type="match status" value="1"/>
</dbReference>
<reference key="1">
    <citation type="journal article" date="2003" name="Proc. Natl. Acad. Sci. U.S.A.">
        <title>Identification, classification, and partial characterization of genes in humans and other vertebrates homologous to a fish membrane progestin receptor.</title>
        <authorList>
            <person name="Zhu Y."/>
            <person name="Bond J."/>
            <person name="Thomas P."/>
        </authorList>
    </citation>
    <scope>NUCLEOTIDE SEQUENCE [MRNA]</scope>
    <source>
        <tissue>Small intestine</tissue>
    </source>
</reference>
<comment type="function">
    <text evidence="1">Plasma membrane progesterone (P4) receptor coupled to G proteins. Seems to act through a G(i) mediated pathway. May be involved in oocyte maturation. Involved in neurosteroid inhibition of apoptosis. Also binds dehydroepiandrosterone (DHEA), pregnanolone, pregnenolone and allopregnanolone.</text>
</comment>
<comment type="subcellular location">
    <subcellularLocation>
        <location evidence="1">Cell membrane</location>
        <topology evidence="2">Multi-pass membrane protein</topology>
    </subcellularLocation>
</comment>
<comment type="miscellaneous">
    <text evidence="1">Non-classical progesterone receptors involved in extranuclear signaling are classified in 2 groups: the class II progestin and adipoQ receptor (PAQR) family (also called mPRs) (PAQR5, PAQR6, PAQR7, PAQR8 and PAQR9) and the b5-like heme/steroid-binding protein family (also called MAPRs) (PGRMC1, PGRMC2, NENF and CYB5D2).</text>
</comment>
<comment type="similarity">
    <text evidence="3">Belongs to the ADIPOR family.</text>
</comment>
<name>PAQR7_PIG</name>
<feature type="chain" id="PRO_0000218837" description="Membrane progestin receptor alpha">
    <location>
        <begin position="1"/>
        <end position="350"/>
    </location>
</feature>
<feature type="topological domain" description="Cytoplasmic" evidence="2">
    <location>
        <begin position="1"/>
        <end position="80"/>
    </location>
</feature>
<feature type="transmembrane region" description="Helical; Name=1" evidence="2">
    <location>
        <begin position="81"/>
        <end position="101"/>
    </location>
</feature>
<feature type="topological domain" description="Extracellular" evidence="2">
    <location>
        <begin position="102"/>
        <end position="105"/>
    </location>
</feature>
<feature type="transmembrane region" description="Helical; Name=2" evidence="2">
    <location>
        <begin position="106"/>
        <end position="126"/>
    </location>
</feature>
<feature type="topological domain" description="Cytoplasmic" evidence="2">
    <location>
        <begin position="127"/>
        <end position="139"/>
    </location>
</feature>
<feature type="transmembrane region" description="Helical; Name=3" evidence="2">
    <location>
        <begin position="140"/>
        <end position="160"/>
    </location>
</feature>
<feature type="topological domain" description="Extracellular" evidence="2">
    <location>
        <begin position="161"/>
        <end position="165"/>
    </location>
</feature>
<feature type="transmembrane region" description="Helical; Name=4" evidence="2">
    <location>
        <begin position="166"/>
        <end position="186"/>
    </location>
</feature>
<feature type="topological domain" description="Cytoplasmic" evidence="2">
    <location>
        <begin position="187"/>
        <end position="239"/>
    </location>
</feature>
<feature type="transmembrane region" description="Helical; Name=5" evidence="2">
    <location>
        <begin position="240"/>
        <end position="260"/>
    </location>
</feature>
<feature type="topological domain" description="Extracellular" evidence="2">
    <location>
        <begin position="261"/>
        <end position="278"/>
    </location>
</feature>
<feature type="transmembrane region" description="Helical; Name=6" evidence="2">
    <location>
        <begin position="279"/>
        <end position="299"/>
    </location>
</feature>
<feature type="topological domain" description="Cytoplasmic" evidence="2">
    <location>
        <begin position="300"/>
        <end position="318"/>
    </location>
</feature>
<feature type="transmembrane region" description="Helical; Name=7" evidence="2">
    <location>
        <begin position="319"/>
        <end position="339"/>
    </location>
</feature>
<feature type="topological domain" description="Extracellular" evidence="2">
    <location>
        <begin position="340"/>
        <end position="350"/>
    </location>
</feature>
<organism>
    <name type="scientific">Sus scrofa</name>
    <name type="common">Pig</name>
    <dbReference type="NCBI Taxonomy" id="9823"/>
    <lineage>
        <taxon>Eukaryota</taxon>
        <taxon>Metazoa</taxon>
        <taxon>Chordata</taxon>
        <taxon>Craniata</taxon>
        <taxon>Vertebrata</taxon>
        <taxon>Euteleostomi</taxon>
        <taxon>Mammalia</taxon>
        <taxon>Eutheria</taxon>
        <taxon>Laurasiatheria</taxon>
        <taxon>Artiodactyla</taxon>
        <taxon>Suina</taxon>
        <taxon>Suidae</taxon>
        <taxon>Sus</taxon>
    </lineage>
</organism>
<evidence type="ECO:0000250" key="1">
    <source>
        <dbReference type="UniProtKB" id="Q86WK9"/>
    </source>
</evidence>
<evidence type="ECO:0000255" key="2"/>
<evidence type="ECO:0000305" key="3"/>